<feature type="chain" id="PRO_0000052188" description="3,9-dihydroxypterocarpan 6A-monooxygenase">
    <location>
        <begin position="1"/>
        <end position="509"/>
    </location>
</feature>
<feature type="binding site" description="axial binding residue" evidence="1">
    <location>
        <position position="447"/>
    </location>
    <ligand>
        <name>heme</name>
        <dbReference type="ChEBI" id="CHEBI:30413"/>
    </ligand>
    <ligandPart>
        <name>Fe</name>
        <dbReference type="ChEBI" id="CHEBI:18248"/>
    </ligandPart>
</feature>
<reference key="1">
    <citation type="journal article" date="1996" name="FEBS Lett.">
        <title>Induction of a novel cytochrome P450 (CYP93 family) by methyl jasmonate in soybean suspension-cultured cells.</title>
        <authorList>
            <person name="Suzuki G."/>
            <person name="Ohta H."/>
            <person name="Kato T."/>
            <person name="Igarashi T."/>
            <person name="Sakai F."/>
            <person name="Shibata D."/>
            <person name="Takano A."/>
            <person name="Masuda T."/>
            <person name="Shioi Y."/>
            <person name="Takamiya K."/>
        </authorList>
    </citation>
    <scope>NUCLEOTIDE SEQUENCE [MRNA]</scope>
    <scope>INDUCTION BY METHYL JASMONATE</scope>
    <source>
        <strain>cv. Corsoy</strain>
    </source>
</reference>
<reference key="2">
    <citation type="journal article" date="2010" name="Nature">
        <title>Genome sequence of the palaeopolyploid soybean.</title>
        <authorList>
            <person name="Schmutz J."/>
            <person name="Cannon S.B."/>
            <person name="Schlueter J."/>
            <person name="Ma J."/>
            <person name="Mitros T."/>
            <person name="Nelson W."/>
            <person name="Hyten D.L."/>
            <person name="Song Q."/>
            <person name="Thelen J.J."/>
            <person name="Cheng J."/>
            <person name="Xu D."/>
            <person name="Hellsten U."/>
            <person name="May G.D."/>
            <person name="Yu Y."/>
            <person name="Sakurai T."/>
            <person name="Umezawa T."/>
            <person name="Bhattacharyya M.K."/>
            <person name="Sandhu D."/>
            <person name="Valliyodan B."/>
            <person name="Lindquist E."/>
            <person name="Peto M."/>
            <person name="Grant D."/>
            <person name="Shu S."/>
            <person name="Goodstein D."/>
            <person name="Barry K."/>
            <person name="Futrell-Griggs M."/>
            <person name="Abernathy B."/>
            <person name="Du J."/>
            <person name="Tian Z."/>
            <person name="Zhu L."/>
            <person name="Gill N."/>
            <person name="Joshi T."/>
            <person name="Libault M."/>
            <person name="Sethuraman A."/>
            <person name="Zhang X.-C."/>
            <person name="Shinozaki K."/>
            <person name="Nguyen H.T."/>
            <person name="Wing R.A."/>
            <person name="Cregan P."/>
            <person name="Specht J."/>
            <person name="Grimwood J."/>
            <person name="Rokhsar D."/>
            <person name="Stacey G."/>
            <person name="Shoemaker R.C."/>
            <person name="Jackson S.A."/>
        </authorList>
    </citation>
    <scope>NUCLEOTIDE SEQUENCE [LARGE SCALE GENOMIC DNA]</scope>
    <source>
        <strain>cv. Williams 82</strain>
    </source>
</reference>
<reference key="3">
    <citation type="journal article" date="1998" name="FEBS Lett.">
        <title>Molecular characterization and functional expression of dihydroxypterocarpan 6a-hydroxylase, an enzyme specific for pterocarpanoid phytoalexin biosynthesis in soybean (Glycine max L.).</title>
        <authorList>
            <person name="Schopfer C.R."/>
            <person name="Kochs G."/>
            <person name="Lottspeich F."/>
            <person name="Ebel J."/>
        </authorList>
    </citation>
    <scope>PROTEIN SEQUENCE OF 331-340</scope>
    <scope>FUNCTION</scope>
    <scope>CATALYTIC ACTIVITY</scope>
    <scope>BIOPHYSICOCHEMICAL PROPERTIES</scope>
    <scope>INDUCTION BY ELICITOR</scope>
</reference>
<reference key="4">
    <citation type="journal article" date="2010" name="Proc. Natl. Acad. Sci. U.S.A.">
        <title>A subtilisin-like protein from soybean contains an embedded, cryptic signal that activates defense-related genes.</title>
        <authorList>
            <person name="Pearce G."/>
            <person name="Yamaguchi Y."/>
            <person name="Barona G."/>
            <person name="Ryan C.A."/>
        </authorList>
    </citation>
    <scope>INDUCTION BY GMSUBPEP</scope>
    <source>
        <strain>cv. A3525</strain>
    </source>
</reference>
<reference key="5">
    <citation type="journal article" date="2011" name="Plant Physiol.">
        <title>GmPep914, an eight-amino acid peptide isolated from soybean leaves, activates defense-related genes.</title>
        <authorList>
            <person name="Yamaguchi Y."/>
            <person name="Barona G."/>
            <person name="Ryan C.A."/>
            <person name="Pearce G."/>
        </authorList>
    </citation>
    <scope>INDUCTION BY GMPEP890 AND GMPEP914</scope>
    <source>
        <strain>cv. A3525</strain>
    </source>
</reference>
<reference key="6">
    <citation type="journal article" date="2014" name="PLoS ONE">
        <title>Finding sequences for over 270 orphan enzymes.</title>
        <authorList>
            <person name="Shearer A.G."/>
            <person name="Altman T."/>
            <person name="Rhee C.D."/>
        </authorList>
    </citation>
    <scope>IDENTIFICATION AS CYP93A1</scope>
</reference>
<name>C93A1_SOYBN</name>
<proteinExistence type="evidence at protein level"/>
<organism>
    <name type="scientific">Glycine max</name>
    <name type="common">Soybean</name>
    <name type="synonym">Glycine hispida</name>
    <dbReference type="NCBI Taxonomy" id="3847"/>
    <lineage>
        <taxon>Eukaryota</taxon>
        <taxon>Viridiplantae</taxon>
        <taxon>Streptophyta</taxon>
        <taxon>Embryophyta</taxon>
        <taxon>Tracheophyta</taxon>
        <taxon>Spermatophyta</taxon>
        <taxon>Magnoliopsida</taxon>
        <taxon>eudicotyledons</taxon>
        <taxon>Gunneridae</taxon>
        <taxon>Pentapetalae</taxon>
        <taxon>rosids</taxon>
        <taxon>fabids</taxon>
        <taxon>Fabales</taxon>
        <taxon>Fabaceae</taxon>
        <taxon>Papilionoideae</taxon>
        <taxon>50 kb inversion clade</taxon>
        <taxon>NPAAA clade</taxon>
        <taxon>indigoferoid/millettioid clade</taxon>
        <taxon>Phaseoleae</taxon>
        <taxon>Glycine</taxon>
        <taxon>Glycine subgen. Soja</taxon>
    </lineage>
</organism>
<gene>
    <name type="primary">CYP93A1</name>
    <name type="ordered locus">Glyma03g29950</name>
</gene>
<accession>Q42798</accession>
<keyword id="KW-0903">Direct protein sequencing</keyword>
<keyword id="KW-0349">Heme</keyword>
<keyword id="KW-0408">Iron</keyword>
<keyword id="KW-0472">Membrane</keyword>
<keyword id="KW-0479">Metal-binding</keyword>
<keyword id="KW-0503">Monooxygenase</keyword>
<keyword id="KW-0560">Oxidoreductase</keyword>
<keyword id="KW-0611">Plant defense</keyword>
<keyword id="KW-1185">Reference proteome</keyword>
<evidence type="ECO:0000250" key="1"/>
<evidence type="ECO:0000269" key="2">
    <source>
    </source>
</evidence>
<evidence type="ECO:0000269" key="3">
    <source>
    </source>
</evidence>
<evidence type="ECO:0000269" key="4">
    <source>
    </source>
</evidence>
<evidence type="ECO:0000269" key="5">
    <source>
    </source>
</evidence>
<evidence type="ECO:0000305" key="6"/>
<protein>
    <recommendedName>
        <fullName>3,9-dihydroxypterocarpan 6A-monooxygenase</fullName>
        <ecNumber evidence="5">1.14.14.93</ecNumber>
    </recommendedName>
    <alternativeName>
        <fullName>Cytochrome P450 93A1</fullName>
    </alternativeName>
    <alternativeName>
        <fullName>Dihydroxypterocarpan 6a-hydroxylase</fullName>
        <shortName>D6aH</shortName>
    </alternativeName>
</protein>
<dbReference type="EC" id="1.14.14.93" evidence="5"/>
<dbReference type="EMBL" id="D83968">
    <property type="protein sequence ID" value="BAA12159.1"/>
    <property type="molecule type" value="mRNA"/>
</dbReference>
<dbReference type="PIR" id="S62899">
    <property type="entry name" value="S62899"/>
</dbReference>
<dbReference type="RefSeq" id="NP_001241186.1">
    <property type="nucleotide sequence ID" value="NM_001254257.2"/>
</dbReference>
<dbReference type="SMR" id="Q42798"/>
<dbReference type="STRING" id="3847.Q42798"/>
<dbReference type="PaxDb" id="3847-GLYMA03G29950.1"/>
<dbReference type="EnsemblPlants" id="KRH67050">
    <property type="protein sequence ID" value="KRH67050"/>
    <property type="gene ID" value="GLYMA_03G143700"/>
</dbReference>
<dbReference type="GeneID" id="100776878"/>
<dbReference type="Gramene" id="KRH67050">
    <property type="protein sequence ID" value="KRH67050"/>
    <property type="gene ID" value="GLYMA_03G143700"/>
</dbReference>
<dbReference type="KEGG" id="gmx:100776878"/>
<dbReference type="eggNOG" id="KOG0156">
    <property type="taxonomic scope" value="Eukaryota"/>
</dbReference>
<dbReference type="HOGENOM" id="CLU_001570_4_0_1"/>
<dbReference type="InParanoid" id="Q42798"/>
<dbReference type="OMA" id="DMFWFCK"/>
<dbReference type="OrthoDB" id="1103324at2759"/>
<dbReference type="Proteomes" id="UP000008827">
    <property type="component" value="Chromosome 3"/>
</dbReference>
<dbReference type="GO" id="GO:0016020">
    <property type="term" value="C:membrane"/>
    <property type="evidence" value="ECO:0000318"/>
    <property type="project" value="GO_Central"/>
</dbReference>
<dbReference type="GO" id="GO:0047082">
    <property type="term" value="F:3,9-dihydroxypterocarpan 6a-monooxygenase activity"/>
    <property type="evidence" value="ECO:0007669"/>
    <property type="project" value="UniProtKB-EC"/>
</dbReference>
<dbReference type="GO" id="GO:0020037">
    <property type="term" value="F:heme binding"/>
    <property type="evidence" value="ECO:0007669"/>
    <property type="project" value="InterPro"/>
</dbReference>
<dbReference type="GO" id="GO:0005506">
    <property type="term" value="F:iron ion binding"/>
    <property type="evidence" value="ECO:0007669"/>
    <property type="project" value="InterPro"/>
</dbReference>
<dbReference type="GO" id="GO:0016709">
    <property type="term" value="F:oxidoreductase activity, acting on paired donors, with incorporation or reduction of molecular oxygen, NAD(P)H as one donor, and incorporation of one atom of oxygen"/>
    <property type="evidence" value="ECO:0000318"/>
    <property type="project" value="GO_Central"/>
</dbReference>
<dbReference type="GO" id="GO:0006952">
    <property type="term" value="P:defense response"/>
    <property type="evidence" value="ECO:0007669"/>
    <property type="project" value="UniProtKB-KW"/>
</dbReference>
<dbReference type="CDD" id="cd20655">
    <property type="entry name" value="CYP93"/>
    <property type="match status" value="1"/>
</dbReference>
<dbReference type="FunFam" id="1.10.630.10:FF:000019">
    <property type="entry name" value="Cytochrome P450 family protein"/>
    <property type="match status" value="1"/>
</dbReference>
<dbReference type="Gene3D" id="1.10.630.10">
    <property type="entry name" value="Cytochrome P450"/>
    <property type="match status" value="1"/>
</dbReference>
<dbReference type="InterPro" id="IPR001128">
    <property type="entry name" value="Cyt_P450"/>
</dbReference>
<dbReference type="InterPro" id="IPR017972">
    <property type="entry name" value="Cyt_P450_CS"/>
</dbReference>
<dbReference type="InterPro" id="IPR002401">
    <property type="entry name" value="Cyt_P450_E_grp-I"/>
</dbReference>
<dbReference type="InterPro" id="IPR036396">
    <property type="entry name" value="Cyt_P450_sf"/>
</dbReference>
<dbReference type="PANTHER" id="PTHR47943:SF8">
    <property type="entry name" value="CYTOCHROME P450"/>
    <property type="match status" value="1"/>
</dbReference>
<dbReference type="PANTHER" id="PTHR47943">
    <property type="entry name" value="CYTOCHROME P450 93A3-LIKE"/>
    <property type="match status" value="1"/>
</dbReference>
<dbReference type="Pfam" id="PF00067">
    <property type="entry name" value="p450"/>
    <property type="match status" value="1"/>
</dbReference>
<dbReference type="PRINTS" id="PR00463">
    <property type="entry name" value="EP450I"/>
</dbReference>
<dbReference type="PRINTS" id="PR00385">
    <property type="entry name" value="P450"/>
</dbReference>
<dbReference type="SUPFAM" id="SSF48264">
    <property type="entry name" value="Cytochrome P450"/>
    <property type="match status" value="1"/>
</dbReference>
<dbReference type="PROSITE" id="PS00086">
    <property type="entry name" value="CYTOCHROME_P450"/>
    <property type="match status" value="1"/>
</dbReference>
<comment type="function">
    <text evidence="5">Cytochrome P450 involved in the biosynthesis of the phytoalexin glyceollin. Stereospecific for (6aR,11aR)-3,9-dihydroxypterocarpan.</text>
</comment>
<comment type="catalytic activity">
    <reaction evidence="5">
        <text>(6aR,11aR)-3,9-dihydroxypterocarpan + reduced [NADPH--hemoprotein reductase] + O2 = (6aS,11aS)-3,6a,9-trihydroxypterocarpan + oxidized [NADPH--hemoprotein reductase] + H2O + H(+)</text>
        <dbReference type="Rhea" id="RHEA:15321"/>
        <dbReference type="Rhea" id="RHEA-COMP:11964"/>
        <dbReference type="Rhea" id="RHEA-COMP:11965"/>
        <dbReference type="ChEBI" id="CHEBI:15377"/>
        <dbReference type="ChEBI" id="CHEBI:15378"/>
        <dbReference type="ChEBI" id="CHEBI:15379"/>
        <dbReference type="ChEBI" id="CHEBI:15648"/>
        <dbReference type="ChEBI" id="CHEBI:15649"/>
        <dbReference type="ChEBI" id="CHEBI:57618"/>
        <dbReference type="ChEBI" id="CHEBI:58210"/>
        <dbReference type="EC" id="1.14.14.93"/>
    </reaction>
</comment>
<comment type="cofactor">
    <cofactor evidence="1">
        <name>heme</name>
        <dbReference type="ChEBI" id="CHEBI:30413"/>
    </cofactor>
</comment>
<comment type="biophysicochemical properties">
    <kinetics>
        <KM evidence="5">0.1 uM for (6aR,11aR)-3,9-dihydroxypterocarpan</KM>
    </kinetics>
    <phDependence>
        <text evidence="5">Optimum pH is 7.4.</text>
    </phDependence>
    <temperatureDependence>
        <text evidence="5">Optimum temperature is 30 degrees Celsius.</text>
    </temperatureDependence>
</comment>
<comment type="subcellular location">
    <subcellularLocation>
        <location evidence="6">Membrane</location>
    </subcellularLocation>
</comment>
<comment type="induction">
    <text evidence="2 3 4 5">Up-regulated by methyl jasmonate, elicitor treatments and elicitor peptides GmSubPep, GmPEP890 and GmPEP914.</text>
</comment>
<comment type="similarity">
    <text evidence="6">Belongs to the cytochrome P450 family.</text>
</comment>
<sequence length="509" mass="57870">MAYQVLLICLVSTIVFAYILWRKQSKKNLPPSPKALPIIGHLHLVSPIPHQDFYKLSTRHGPIMQLFLGSVPCVVASTAEAAKEFLKTHEINFSNRPGQNVAVKGLAYDSQDFLFAFAPFGPYWKFMKKLCMSELLSGRMMDQFLPVRQQETKRFISRVFRKGVAGEAVDFGDELMTLSNNIVSRMTLSQKTSENDNQAEEMKKLVSNIAELMGKFNVSDFIWYLKPFDLQGFNRKIKETRDRFDVVVDGIIKQRQEERRKNKETGTAKQFKDMLDVLLDMHEDENAEIKLDKKNIKAFIMDIFVAGTDTSAVSIEWAMAELINNPDVLEKARQEIDAVVGKSRMVEESDIANLPYLQAIVRETLRLHPGGPLVVRESSKSAVVCGYDIPAKTRLFVNVWAIGRDPNHWEKPFEFRPERFIRDGQNQLDVRGQHYHFIPFGSGRRTCPGASLAWQVVPVNLAIIIQCFQWKLVGGNGKVDMEEKSGITLPRANPIICVPVPRINPFPTI</sequence>